<reference key="1">
    <citation type="journal article" date="2002" name="Nature">
        <title>The genome sequence of Schizosaccharomyces pombe.</title>
        <authorList>
            <person name="Wood V."/>
            <person name="Gwilliam R."/>
            <person name="Rajandream M.A."/>
            <person name="Lyne M.H."/>
            <person name="Lyne R."/>
            <person name="Stewart A."/>
            <person name="Sgouros J.G."/>
            <person name="Peat N."/>
            <person name="Hayles J."/>
            <person name="Baker S.G."/>
            <person name="Basham D."/>
            <person name="Bowman S."/>
            <person name="Brooks K."/>
            <person name="Brown D."/>
            <person name="Brown S."/>
            <person name="Chillingworth T."/>
            <person name="Churcher C.M."/>
            <person name="Collins M."/>
            <person name="Connor R."/>
            <person name="Cronin A."/>
            <person name="Davis P."/>
            <person name="Feltwell T."/>
            <person name="Fraser A."/>
            <person name="Gentles S."/>
            <person name="Goble A."/>
            <person name="Hamlin N."/>
            <person name="Harris D.E."/>
            <person name="Hidalgo J."/>
            <person name="Hodgson G."/>
            <person name="Holroyd S."/>
            <person name="Hornsby T."/>
            <person name="Howarth S."/>
            <person name="Huckle E.J."/>
            <person name="Hunt S."/>
            <person name="Jagels K."/>
            <person name="James K.D."/>
            <person name="Jones L."/>
            <person name="Jones M."/>
            <person name="Leather S."/>
            <person name="McDonald S."/>
            <person name="McLean J."/>
            <person name="Mooney P."/>
            <person name="Moule S."/>
            <person name="Mungall K.L."/>
            <person name="Murphy L.D."/>
            <person name="Niblett D."/>
            <person name="Odell C."/>
            <person name="Oliver K."/>
            <person name="O'Neil S."/>
            <person name="Pearson D."/>
            <person name="Quail M.A."/>
            <person name="Rabbinowitsch E."/>
            <person name="Rutherford K.M."/>
            <person name="Rutter S."/>
            <person name="Saunders D."/>
            <person name="Seeger K."/>
            <person name="Sharp S."/>
            <person name="Skelton J."/>
            <person name="Simmonds M.N."/>
            <person name="Squares R."/>
            <person name="Squares S."/>
            <person name="Stevens K."/>
            <person name="Taylor K."/>
            <person name="Taylor R.G."/>
            <person name="Tivey A."/>
            <person name="Walsh S.V."/>
            <person name="Warren T."/>
            <person name="Whitehead S."/>
            <person name="Woodward J.R."/>
            <person name="Volckaert G."/>
            <person name="Aert R."/>
            <person name="Robben J."/>
            <person name="Grymonprez B."/>
            <person name="Weltjens I."/>
            <person name="Vanstreels E."/>
            <person name="Rieger M."/>
            <person name="Schaefer M."/>
            <person name="Mueller-Auer S."/>
            <person name="Gabel C."/>
            <person name="Fuchs M."/>
            <person name="Duesterhoeft A."/>
            <person name="Fritzc C."/>
            <person name="Holzer E."/>
            <person name="Moestl D."/>
            <person name="Hilbert H."/>
            <person name="Borzym K."/>
            <person name="Langer I."/>
            <person name="Beck A."/>
            <person name="Lehrach H."/>
            <person name="Reinhardt R."/>
            <person name="Pohl T.M."/>
            <person name="Eger P."/>
            <person name="Zimmermann W."/>
            <person name="Wedler H."/>
            <person name="Wambutt R."/>
            <person name="Purnelle B."/>
            <person name="Goffeau A."/>
            <person name="Cadieu E."/>
            <person name="Dreano S."/>
            <person name="Gloux S."/>
            <person name="Lelaure V."/>
            <person name="Mottier S."/>
            <person name="Galibert F."/>
            <person name="Aves S.J."/>
            <person name="Xiang Z."/>
            <person name="Hunt C."/>
            <person name="Moore K."/>
            <person name="Hurst S.M."/>
            <person name="Lucas M."/>
            <person name="Rochet M."/>
            <person name="Gaillardin C."/>
            <person name="Tallada V.A."/>
            <person name="Garzon A."/>
            <person name="Thode G."/>
            <person name="Daga R.R."/>
            <person name="Cruzado L."/>
            <person name="Jimenez J."/>
            <person name="Sanchez M."/>
            <person name="del Rey F."/>
            <person name="Benito J."/>
            <person name="Dominguez A."/>
            <person name="Revuelta J.L."/>
            <person name="Moreno S."/>
            <person name="Armstrong J."/>
            <person name="Forsburg S.L."/>
            <person name="Cerutti L."/>
            <person name="Lowe T."/>
            <person name="McCombie W.R."/>
            <person name="Paulsen I."/>
            <person name="Potashkin J."/>
            <person name="Shpakovski G.V."/>
            <person name="Ussery D."/>
            <person name="Barrell B.G."/>
            <person name="Nurse P."/>
        </authorList>
    </citation>
    <scope>NUCLEOTIDE SEQUENCE [LARGE SCALE GENOMIC DNA]</scope>
    <source>
        <strain>972 / ATCC 24843</strain>
    </source>
</reference>
<reference key="2">
    <citation type="journal article" date="2006" name="Nat. Biotechnol.">
        <title>ORFeome cloning and global analysis of protein localization in the fission yeast Schizosaccharomyces pombe.</title>
        <authorList>
            <person name="Matsuyama A."/>
            <person name="Arai R."/>
            <person name="Yashiroda Y."/>
            <person name="Shirai A."/>
            <person name="Kamata A."/>
            <person name="Sekido S."/>
            <person name="Kobayashi Y."/>
            <person name="Hashimoto A."/>
            <person name="Hamamoto M."/>
            <person name="Hiraoka Y."/>
            <person name="Horinouchi S."/>
            <person name="Yoshida M."/>
        </authorList>
    </citation>
    <scope>SUBCELLULAR LOCATION [LARGE SCALE ANALYSIS]</scope>
</reference>
<reference key="3">
    <citation type="journal article" date="2009" name="Microbiology">
        <title>Autophagy-deficient Schizosaccharomyces pombe mutants undergo partial sporulation during nitrogen starvation.</title>
        <authorList>
            <person name="Mukaiyama H."/>
            <person name="Kajiwara S."/>
            <person name="Hosomi A."/>
            <person name="Giga-Hama Y."/>
            <person name="Tanaka N."/>
            <person name="Nakamura T."/>
            <person name="Takegawa K."/>
        </authorList>
    </citation>
    <scope>DISRUPTION PHENOTYPE</scope>
</reference>
<reference key="4">
    <citation type="journal article" date="2013" name="PLoS Genet.">
        <title>Global analysis of fission yeast mating genes reveals new autophagy factors.</title>
        <authorList>
            <person name="Sun L.L."/>
            <person name="Li M."/>
            <person name="Suo F."/>
            <person name="Liu X.M."/>
            <person name="Shen E.Z."/>
            <person name="Yang B."/>
            <person name="Dong M.Q."/>
            <person name="He W.Z."/>
            <person name="Du L.L."/>
        </authorList>
    </citation>
    <scope>DISRUPTION PHENOTYPE</scope>
    <scope>SUBCELLULAR LOCATION</scope>
</reference>
<reference key="5">
    <citation type="journal article" date="2020" name="Autophagy">
        <title>Atg38-Atg8 interaction in fission yeast establishes a positive feedback loop to promote autophagy.</title>
        <authorList>
            <person name="Yu Z.Q."/>
            <person name="Sun L.L."/>
            <person name="Jiang Z.D."/>
            <person name="Liu X.M."/>
            <person name="Zhao D."/>
            <person name="Wang H.T."/>
            <person name="He W.Z."/>
            <person name="Dong M.Q."/>
            <person name="Du L.L."/>
        </authorList>
    </citation>
    <scope>FUNCTION</scope>
    <scope>IDENTIFICATION IN THE AUTOPHAGY-SPECIFIC VPS34 PI3-KINASE COMPLEX I</scope>
</reference>
<proteinExistence type="evidence at protein level"/>
<name>BECN1_SCHPO</name>
<dbReference type="EMBL" id="CU329670">
    <property type="protein sequence ID" value="CAB08604.2"/>
    <property type="molecule type" value="Genomic_DNA"/>
</dbReference>
<dbReference type="PIR" id="T38669">
    <property type="entry name" value="T38669"/>
</dbReference>
<dbReference type="RefSeq" id="XP_001713051.1">
    <property type="nucleotide sequence ID" value="XM_001712999.2"/>
</dbReference>
<dbReference type="SMR" id="P87117"/>
<dbReference type="BioGRID" id="280624">
    <property type="interactions" value="210"/>
</dbReference>
<dbReference type="ComplexPortal" id="CPX-25763">
    <property type="entry name" value="Phosphatidylinositol 3-kinase complex, class III, type I"/>
</dbReference>
<dbReference type="ComplexPortal" id="CPX-25772">
    <property type="entry name" value="Phosphatidylinositol 3-kinase complex, class III, type II"/>
</dbReference>
<dbReference type="FunCoup" id="P87117">
    <property type="interactions" value="295"/>
</dbReference>
<dbReference type="STRING" id="284812.P87117"/>
<dbReference type="iPTMnet" id="P87117"/>
<dbReference type="PaxDb" id="4896-SPAC20G8.10c.1"/>
<dbReference type="EnsemblFungi" id="SPAC20G8.10c.1">
    <property type="protein sequence ID" value="SPAC20G8.10c.1:pep"/>
    <property type="gene ID" value="SPAC20G8.10c"/>
</dbReference>
<dbReference type="PomBase" id="SPAC20G8.10c">
    <property type="gene designation" value="atg6"/>
</dbReference>
<dbReference type="VEuPathDB" id="FungiDB:SPAC20G8.10c"/>
<dbReference type="eggNOG" id="KOG2751">
    <property type="taxonomic scope" value="Eukaryota"/>
</dbReference>
<dbReference type="HOGENOM" id="CLU_024219_3_1_1"/>
<dbReference type="InParanoid" id="P87117"/>
<dbReference type="OMA" id="EWDVYKA"/>
<dbReference type="Reactome" id="R-SPO-1632852">
    <property type="pathway name" value="Macroautophagy"/>
</dbReference>
<dbReference type="Reactome" id="R-SPO-5689880">
    <property type="pathway name" value="Ub-specific processing proteases"/>
</dbReference>
<dbReference type="PRO" id="PR:P87117"/>
<dbReference type="Proteomes" id="UP000002485">
    <property type="component" value="Chromosome I"/>
</dbReference>
<dbReference type="GO" id="GO:0005737">
    <property type="term" value="C:cytoplasm"/>
    <property type="evidence" value="ECO:0007005"/>
    <property type="project" value="PomBase"/>
</dbReference>
<dbReference type="GO" id="GO:0005768">
    <property type="term" value="C:endosome"/>
    <property type="evidence" value="ECO:0000314"/>
    <property type="project" value="PomBase"/>
</dbReference>
<dbReference type="GO" id="GO:0010008">
    <property type="term" value="C:endosome membrane"/>
    <property type="evidence" value="ECO:0007669"/>
    <property type="project" value="UniProtKB-SubCell"/>
</dbReference>
<dbReference type="GO" id="GO:0000407">
    <property type="term" value="C:phagophore assembly site"/>
    <property type="evidence" value="ECO:0000314"/>
    <property type="project" value="PomBase"/>
</dbReference>
<dbReference type="GO" id="GO:0034045">
    <property type="term" value="C:phagophore assembly site membrane"/>
    <property type="evidence" value="ECO:0007669"/>
    <property type="project" value="UniProtKB-SubCell"/>
</dbReference>
<dbReference type="GO" id="GO:0034271">
    <property type="term" value="C:phosphatidylinositol 3-kinase complex, class III, type I"/>
    <property type="evidence" value="ECO:0000314"/>
    <property type="project" value="PomBase"/>
</dbReference>
<dbReference type="GO" id="GO:0034272">
    <property type="term" value="C:phosphatidylinositol 3-kinase complex, class III, type II"/>
    <property type="evidence" value="ECO:0000314"/>
    <property type="project" value="PomBase"/>
</dbReference>
<dbReference type="GO" id="GO:0005774">
    <property type="term" value="C:vacuolar membrane"/>
    <property type="evidence" value="ECO:0007669"/>
    <property type="project" value="UniProtKB-SubCell"/>
</dbReference>
<dbReference type="GO" id="GO:0043548">
    <property type="term" value="F:phosphatidylinositol 3-kinase binding"/>
    <property type="evidence" value="ECO:0000318"/>
    <property type="project" value="GO_Central"/>
</dbReference>
<dbReference type="GO" id="GO:0030674">
    <property type="term" value="F:protein-macromolecule adaptor activity"/>
    <property type="evidence" value="ECO:0000318"/>
    <property type="project" value="GO_Central"/>
</dbReference>
<dbReference type="GO" id="GO:0000045">
    <property type="term" value="P:autophagosome assembly"/>
    <property type="evidence" value="ECO:0000318"/>
    <property type="project" value="GO_Central"/>
</dbReference>
<dbReference type="GO" id="GO:0006995">
    <property type="term" value="P:cellular response to nitrogen starvation"/>
    <property type="evidence" value="ECO:0000318"/>
    <property type="project" value="GO_Central"/>
</dbReference>
<dbReference type="GO" id="GO:0045324">
    <property type="term" value="P:late endosome to vacuole transport"/>
    <property type="evidence" value="ECO:0000318"/>
    <property type="project" value="GO_Central"/>
</dbReference>
<dbReference type="GO" id="GO:0016236">
    <property type="term" value="P:macroautophagy"/>
    <property type="evidence" value="ECO:0000315"/>
    <property type="project" value="PomBase"/>
</dbReference>
<dbReference type="GO" id="GO:0000423">
    <property type="term" value="P:mitophagy"/>
    <property type="evidence" value="ECO:0000318"/>
    <property type="project" value="GO_Central"/>
</dbReference>
<dbReference type="GO" id="GO:0006661">
    <property type="term" value="P:phosphatidylinositol biosynthetic process"/>
    <property type="evidence" value="ECO:0000266"/>
    <property type="project" value="PomBase"/>
</dbReference>
<dbReference type="GO" id="GO:0015031">
    <property type="term" value="P:protein transport"/>
    <property type="evidence" value="ECO:0007669"/>
    <property type="project" value="UniProtKB-KW"/>
</dbReference>
<dbReference type="FunFam" id="1.10.418.40:FF:000006">
    <property type="entry name" value="Chromosome 12, whole genome shotgun sequence"/>
    <property type="match status" value="1"/>
</dbReference>
<dbReference type="Gene3D" id="1.10.418.40">
    <property type="entry name" value="Autophagy protein 6/Beclin 1"/>
    <property type="match status" value="1"/>
</dbReference>
<dbReference type="InterPro" id="IPR007243">
    <property type="entry name" value="Atg6/Beclin"/>
</dbReference>
<dbReference type="InterPro" id="IPR038274">
    <property type="entry name" value="Atg6/Beclin_C_sf"/>
</dbReference>
<dbReference type="InterPro" id="IPR041691">
    <property type="entry name" value="Atg6/beclin_CC"/>
</dbReference>
<dbReference type="InterPro" id="IPR040455">
    <property type="entry name" value="Atg6_BARA"/>
</dbReference>
<dbReference type="PANTHER" id="PTHR12768">
    <property type="entry name" value="BECLIN 1"/>
    <property type="match status" value="1"/>
</dbReference>
<dbReference type="PANTHER" id="PTHR12768:SF4">
    <property type="entry name" value="BECLIN-1"/>
    <property type="match status" value="1"/>
</dbReference>
<dbReference type="Pfam" id="PF04111">
    <property type="entry name" value="APG6"/>
    <property type="match status" value="1"/>
</dbReference>
<dbReference type="Pfam" id="PF17675">
    <property type="entry name" value="APG6_N"/>
    <property type="match status" value="1"/>
</dbReference>
<feature type="chain" id="PRO_0000218560" description="Vacuolar protein sorting-associated protein atg6">
    <location>
        <begin position="1"/>
        <end position="464"/>
    </location>
</feature>
<feature type="region of interest" description="Disordered" evidence="4">
    <location>
        <begin position="38"/>
        <end position="57"/>
    </location>
</feature>
<feature type="region of interest" description="BARA" evidence="1">
    <location>
        <begin position="275"/>
        <end position="461"/>
    </location>
</feature>
<feature type="coiled-coil region" evidence="3">
    <location>
        <begin position="144"/>
        <end position="274"/>
    </location>
</feature>
<protein>
    <recommendedName>
        <fullName>Vacuolar protein sorting-associated protein atg6</fullName>
    </recommendedName>
    <alternativeName>
        <fullName>Autophagy-related protein 6</fullName>
    </alternativeName>
</protein>
<organism>
    <name type="scientific">Schizosaccharomyces pombe (strain 972 / ATCC 24843)</name>
    <name type="common">Fission yeast</name>
    <dbReference type="NCBI Taxonomy" id="284812"/>
    <lineage>
        <taxon>Eukaryota</taxon>
        <taxon>Fungi</taxon>
        <taxon>Dikarya</taxon>
        <taxon>Ascomycota</taxon>
        <taxon>Taphrinomycotina</taxon>
        <taxon>Schizosaccharomycetes</taxon>
        <taxon>Schizosaccharomycetales</taxon>
        <taxon>Schizosaccharomycetaceae</taxon>
        <taxon>Schizosaccharomyces</taxon>
    </lineage>
</organism>
<gene>
    <name type="primary">atg6</name>
    <name type="ORF">SPAC20G8.10c</name>
    <name type="ORF">SPAC3A12.01c</name>
</gene>
<evidence type="ECO:0000250" key="1"/>
<evidence type="ECO:0000250" key="2">
    <source>
        <dbReference type="UniProtKB" id="Q02948"/>
    </source>
</evidence>
<evidence type="ECO:0000255" key="3"/>
<evidence type="ECO:0000256" key="4">
    <source>
        <dbReference type="SAM" id="MobiDB-lite"/>
    </source>
</evidence>
<evidence type="ECO:0000269" key="5">
    <source>
    </source>
</evidence>
<evidence type="ECO:0000269" key="6">
    <source>
    </source>
</evidence>
<evidence type="ECO:0000269" key="7">
    <source>
    </source>
</evidence>
<evidence type="ECO:0000305" key="8"/>
<keyword id="KW-0072">Autophagy</keyword>
<keyword id="KW-0175">Coiled coil</keyword>
<keyword id="KW-0963">Cytoplasm</keyword>
<keyword id="KW-0967">Endosome</keyword>
<keyword id="KW-0472">Membrane</keyword>
<keyword id="KW-0597">Phosphoprotein</keyword>
<keyword id="KW-0653">Protein transport</keyword>
<keyword id="KW-1185">Reference proteome</keyword>
<keyword id="KW-0813">Transport</keyword>
<keyword id="KW-0926">Vacuole</keyword>
<accession>P87117</accession>
<accession>P87116</accession>
<comment type="function">
    <text evidence="2 7">Functions as a part of the autophagy-specific VPS34 PI3-kinase complex I that plays a role in autophagosome assembly (PubMed:31941401). This complex is essential to recruit the atg8-phosphatidylinositol conjugate and the atg12-atg5 conjugate to the pre-autophagosomal structure (PubMed:31941401). Also functions as part of the VPS34 PI3-kinase complex II (By similarity).</text>
</comment>
<comment type="subunit">
    <text evidence="2 7">Component of the autophagy-specific vps34 PI3-kinase complex I composed of vps15, atg6, pik3/vps34, atg14 and atg38 (PubMed:31941401). Also a component of the vps34 PI3-kinase complex II composed of atg6, pik3, vps15 and vps38 (By similarity).</text>
</comment>
<comment type="subcellular location">
    <subcellularLocation>
        <location>Endosome membrane</location>
        <topology>Peripheral membrane protein</topology>
    </subcellularLocation>
    <subcellularLocation>
        <location evidence="1">Vacuole membrane</location>
        <topology evidence="1">Peripheral membrane protein</topology>
    </subcellularLocation>
    <subcellularLocation>
        <location evidence="2">Preautophagosomal structure membrane</location>
        <topology>Peripheral membrane protein</topology>
    </subcellularLocation>
    <subcellularLocation>
        <location>Cytoplasm</location>
    </subcellularLocation>
</comment>
<comment type="domain">
    <text evidence="2">The C-terminal domain called the BARA domain is dispensable for the construction of both vps34 PI3-kinase complexes, but is specifically required for autophagy through the targeting of complex I to the preautophagosomal structure.</text>
</comment>
<comment type="disruption phenotype">
    <text evidence="5 6">Impairs atg8-processing (PubMed:23950735). Decreases sporulation in conditions of nitrogen starvation (PubMed:19778961).</text>
</comment>
<comment type="similarity">
    <text evidence="8">Belongs to the beclin family.</text>
</comment>
<sequence>MQYLCQRCHSLINFKDVYDDDLLKLKNLPKSRFVQASSLTEMNESGESDDQMNSSSEDYPAQRLQLYKKTISEGDYNFDNVPPPELRTPTLDSFVVLPAAKDGYEEEKNSPEEVNDLFSWKIEIYNRIFDLLSSKTKVDHPLCVECAELLTEEMSKTLRALKEEKKMYFNYDNFLSSQTVHEENTAALDSEIDELMKQINEKEEKIEEISDETDKLQKLLRELDEEKEKVYAEEQEFYNNLNQFQIKKLSLERQYDCANLEFEHNSRKLEKLQKMNVFSDIFYISHYSEPNGEGSIATINGLRLGRLPSQKVNWAEINAAWGMTVLLLDVLTEKLDFHSSSYQLKPFGSQSFIIRFDRDPNGNQVKPTKLDLFSSGELKIFMNRRFDQGMVAFLDYLHQFGDFCAAKTPSAVLPYAIENDRIGGKCIRLAFNQDENWTRALKFVLTDIKFLEAYVSSQDKQSNF</sequence>